<name>QUEF_OCEIH</name>
<comment type="function">
    <text evidence="1">Catalyzes the NADPH-dependent reduction of 7-cyano-7-deazaguanine (preQ0) to 7-aminomethyl-7-deazaguanine (preQ1).</text>
</comment>
<comment type="catalytic activity">
    <reaction evidence="1">
        <text>7-aminomethyl-7-carbaguanine + 2 NADP(+) = 7-cyano-7-deazaguanine + 2 NADPH + 3 H(+)</text>
        <dbReference type="Rhea" id="RHEA:13409"/>
        <dbReference type="ChEBI" id="CHEBI:15378"/>
        <dbReference type="ChEBI" id="CHEBI:45075"/>
        <dbReference type="ChEBI" id="CHEBI:57783"/>
        <dbReference type="ChEBI" id="CHEBI:58349"/>
        <dbReference type="ChEBI" id="CHEBI:58703"/>
        <dbReference type="EC" id="1.7.1.13"/>
    </reaction>
</comment>
<comment type="pathway">
    <text evidence="1">tRNA modification; tRNA-queuosine biosynthesis.</text>
</comment>
<comment type="subcellular location">
    <subcellularLocation>
        <location evidence="1">Cytoplasm</location>
    </subcellularLocation>
</comment>
<comment type="similarity">
    <text evidence="1">Belongs to the GTP cyclohydrolase I family. QueF type 1 subfamily.</text>
</comment>
<accession>Q8EPA3</accession>
<organism>
    <name type="scientific">Oceanobacillus iheyensis (strain DSM 14371 / CIP 107618 / JCM 11309 / KCTC 3954 / HTE831)</name>
    <dbReference type="NCBI Taxonomy" id="221109"/>
    <lineage>
        <taxon>Bacteria</taxon>
        <taxon>Bacillati</taxon>
        <taxon>Bacillota</taxon>
        <taxon>Bacilli</taxon>
        <taxon>Bacillales</taxon>
        <taxon>Bacillaceae</taxon>
        <taxon>Oceanobacillus</taxon>
    </lineage>
</organism>
<proteinExistence type="inferred from homology"/>
<protein>
    <recommendedName>
        <fullName evidence="1">NADPH-dependent 7-cyano-7-deazaguanine reductase</fullName>
        <ecNumber evidence="1">1.7.1.13</ecNumber>
    </recommendedName>
    <alternativeName>
        <fullName evidence="1">7-cyano-7-carbaguanine reductase</fullName>
    </alternativeName>
    <alternativeName>
        <fullName evidence="1">NADPH-dependent nitrile oxidoreductase</fullName>
    </alternativeName>
    <alternativeName>
        <fullName evidence="1">PreQ(0) reductase</fullName>
    </alternativeName>
</protein>
<reference key="1">
    <citation type="journal article" date="2002" name="Nucleic Acids Res.">
        <title>Genome sequence of Oceanobacillus iheyensis isolated from the Iheya Ridge and its unexpected adaptive capabilities to extreme environments.</title>
        <authorList>
            <person name="Takami H."/>
            <person name="Takaki Y."/>
            <person name="Uchiyama I."/>
        </authorList>
    </citation>
    <scope>NUCLEOTIDE SEQUENCE [LARGE SCALE GENOMIC DNA]</scope>
    <source>
        <strain>DSM 14371 / CIP 107618 / JCM 11309 / KCTC 3954 / HTE831</strain>
    </source>
</reference>
<keyword id="KW-0963">Cytoplasm</keyword>
<keyword id="KW-0521">NADP</keyword>
<keyword id="KW-0560">Oxidoreductase</keyword>
<keyword id="KW-0671">Queuosine biosynthesis</keyword>
<keyword id="KW-1185">Reference proteome</keyword>
<feature type="chain" id="PRO_0000162984" description="NADPH-dependent 7-cyano-7-deazaguanine reductase">
    <location>
        <begin position="1"/>
        <end position="165"/>
    </location>
</feature>
<feature type="active site" description="Thioimide intermediate" evidence="1">
    <location>
        <position position="56"/>
    </location>
</feature>
<feature type="active site" description="Proton donor" evidence="1">
    <location>
        <position position="63"/>
    </location>
</feature>
<feature type="binding site" evidence="1">
    <location>
        <begin position="78"/>
        <end position="80"/>
    </location>
    <ligand>
        <name>substrate</name>
    </ligand>
</feature>
<feature type="binding site" evidence="1">
    <location>
        <begin position="97"/>
        <end position="98"/>
    </location>
    <ligand>
        <name>substrate</name>
    </ligand>
</feature>
<evidence type="ECO:0000255" key="1">
    <source>
        <dbReference type="HAMAP-Rule" id="MF_00818"/>
    </source>
</evidence>
<gene>
    <name evidence="1" type="primary">queF</name>
    <name type="ordered locus">OB2210</name>
</gene>
<sequence length="165" mass="19387">MVGRDENELQDVQLLGSQGTTYDFNYTPEVLEVFDNKHVSRDYFVKFNCPEFTTLCPKTNQPDFGTIYISYIPDIKMVESKSLKLYLFSFRNHGDFHEDCINIIMNDLIDLMNPRYIEVRGKFTPRGGISIDPYCNYGRPGTKFEQMADQRLIQHDMYPEKIDNR</sequence>
<dbReference type="EC" id="1.7.1.13" evidence="1"/>
<dbReference type="EMBL" id="BA000028">
    <property type="protein sequence ID" value="BAC14166.1"/>
    <property type="molecule type" value="Genomic_DNA"/>
</dbReference>
<dbReference type="RefSeq" id="WP_011066604.1">
    <property type="nucleotide sequence ID" value="NC_004193.1"/>
</dbReference>
<dbReference type="SMR" id="Q8EPA3"/>
<dbReference type="STRING" id="221109.gene:10734458"/>
<dbReference type="KEGG" id="oih:OB2210"/>
<dbReference type="eggNOG" id="COG0780">
    <property type="taxonomic scope" value="Bacteria"/>
</dbReference>
<dbReference type="HOGENOM" id="CLU_102489_0_1_9"/>
<dbReference type="OrthoDB" id="9795077at2"/>
<dbReference type="PhylomeDB" id="Q8EPA3"/>
<dbReference type="UniPathway" id="UPA00392"/>
<dbReference type="Proteomes" id="UP000000822">
    <property type="component" value="Chromosome"/>
</dbReference>
<dbReference type="GO" id="GO:0005737">
    <property type="term" value="C:cytoplasm"/>
    <property type="evidence" value="ECO:0007669"/>
    <property type="project" value="UniProtKB-SubCell"/>
</dbReference>
<dbReference type="GO" id="GO:0033739">
    <property type="term" value="F:preQ1 synthase activity"/>
    <property type="evidence" value="ECO:0007669"/>
    <property type="project" value="UniProtKB-UniRule"/>
</dbReference>
<dbReference type="GO" id="GO:0008616">
    <property type="term" value="P:queuosine biosynthetic process"/>
    <property type="evidence" value="ECO:0007669"/>
    <property type="project" value="UniProtKB-UniRule"/>
</dbReference>
<dbReference type="GO" id="GO:0006400">
    <property type="term" value="P:tRNA modification"/>
    <property type="evidence" value="ECO:0007669"/>
    <property type="project" value="UniProtKB-UniRule"/>
</dbReference>
<dbReference type="Gene3D" id="3.30.1130.10">
    <property type="match status" value="1"/>
</dbReference>
<dbReference type="HAMAP" id="MF_00818">
    <property type="entry name" value="QueF_type1"/>
    <property type="match status" value="1"/>
</dbReference>
<dbReference type="InterPro" id="IPR043133">
    <property type="entry name" value="GTP-CH-I_C/QueF"/>
</dbReference>
<dbReference type="InterPro" id="IPR050084">
    <property type="entry name" value="NADPH_dep_7-cyano-7-deazaG_red"/>
</dbReference>
<dbReference type="InterPro" id="IPR029500">
    <property type="entry name" value="QueF"/>
</dbReference>
<dbReference type="InterPro" id="IPR016856">
    <property type="entry name" value="QueF_type1"/>
</dbReference>
<dbReference type="NCBIfam" id="TIGR03139">
    <property type="entry name" value="QueF-II"/>
    <property type="match status" value="1"/>
</dbReference>
<dbReference type="PANTHER" id="PTHR34354">
    <property type="entry name" value="NADPH-DEPENDENT 7-CYANO-7-DEAZAGUANINE REDUCTASE"/>
    <property type="match status" value="1"/>
</dbReference>
<dbReference type="PANTHER" id="PTHR34354:SF1">
    <property type="entry name" value="NADPH-DEPENDENT 7-CYANO-7-DEAZAGUANINE REDUCTASE"/>
    <property type="match status" value="1"/>
</dbReference>
<dbReference type="Pfam" id="PF14489">
    <property type="entry name" value="QueF"/>
    <property type="match status" value="1"/>
</dbReference>
<dbReference type="PIRSF" id="PIRSF027377">
    <property type="entry name" value="Nitrile_oxidored_QueF"/>
    <property type="match status" value="1"/>
</dbReference>
<dbReference type="SUPFAM" id="SSF55620">
    <property type="entry name" value="Tetrahydrobiopterin biosynthesis enzymes-like"/>
    <property type="match status" value="1"/>
</dbReference>